<accession>Q9ZE29</accession>
<proteinExistence type="inferred from homology"/>
<organism>
    <name type="scientific">Rickettsia prowazekii (strain Madrid E)</name>
    <dbReference type="NCBI Taxonomy" id="272947"/>
    <lineage>
        <taxon>Bacteria</taxon>
        <taxon>Pseudomonadati</taxon>
        <taxon>Pseudomonadota</taxon>
        <taxon>Alphaproteobacteria</taxon>
        <taxon>Rickettsiales</taxon>
        <taxon>Rickettsiaceae</taxon>
        <taxon>Rickettsieae</taxon>
        <taxon>Rickettsia</taxon>
        <taxon>typhus group</taxon>
    </lineage>
</organism>
<protein>
    <recommendedName>
        <fullName evidence="1">Crossover junction endodeoxyribonuclease RuvC</fullName>
        <ecNumber evidence="1">3.1.21.10</ecNumber>
    </recommendedName>
    <alternativeName>
        <fullName evidence="1">Holliday junction nuclease RuvC</fullName>
    </alternativeName>
    <alternativeName>
        <fullName evidence="1">Holliday junction resolvase RuvC</fullName>
    </alternativeName>
</protein>
<reference key="1">
    <citation type="journal article" date="1998" name="Nature">
        <title>The genome sequence of Rickettsia prowazekii and the origin of mitochondria.</title>
        <authorList>
            <person name="Andersson S.G.E."/>
            <person name="Zomorodipour A."/>
            <person name="Andersson J.O."/>
            <person name="Sicheritz-Ponten T."/>
            <person name="Alsmark U.C.M."/>
            <person name="Podowski R.M."/>
            <person name="Naeslund A.K."/>
            <person name="Eriksson A.-S."/>
            <person name="Winkler H.H."/>
            <person name="Kurland C.G."/>
        </authorList>
    </citation>
    <scope>NUCLEOTIDE SEQUENCE [LARGE SCALE GENOMIC DNA]</scope>
    <source>
        <strain>Madrid E</strain>
    </source>
</reference>
<comment type="function">
    <text evidence="1">The RuvA-RuvB-RuvC complex processes Holliday junction (HJ) DNA during genetic recombination and DNA repair. Endonuclease that resolves HJ intermediates. Cleaves cruciform DNA by making single-stranded nicks across the HJ at symmetrical positions within the homologous arms, yielding a 5'-phosphate and a 3'-hydroxyl group; requires a central core of homology in the junction. The consensus cleavage sequence is 5'-(A/T)TT(C/G)-3'. Cleavage occurs on the 3'-side of the TT dinucleotide at the point of strand exchange. HJ branch migration catalyzed by RuvA-RuvB allows RuvC to scan DNA until it finds its consensus sequence, where it cleaves and resolves the cruciform DNA.</text>
</comment>
<comment type="catalytic activity">
    <reaction evidence="1">
        <text>Endonucleolytic cleavage at a junction such as a reciprocal single-stranded crossover between two homologous DNA duplexes (Holliday junction).</text>
        <dbReference type="EC" id="3.1.21.10"/>
    </reaction>
</comment>
<comment type="cofactor">
    <cofactor evidence="1">
        <name>Mg(2+)</name>
        <dbReference type="ChEBI" id="CHEBI:18420"/>
    </cofactor>
    <text evidence="1">Binds 2 Mg(2+) ion per subunit.</text>
</comment>
<comment type="subunit">
    <text evidence="1">Homodimer which binds Holliday junction (HJ) DNA. The HJ becomes 2-fold symmetrical on binding to RuvC with unstacked arms; it has a different conformation from HJ DNA in complex with RuvA. In the full resolvosome a probable DNA-RuvA(4)-RuvB(12)-RuvC(2) complex forms which resolves the HJ.</text>
</comment>
<comment type="subcellular location">
    <subcellularLocation>
        <location evidence="1">Cytoplasm</location>
    </subcellularLocation>
</comment>
<comment type="similarity">
    <text evidence="1 2">Belongs to the RuvC family.</text>
</comment>
<comment type="sequence caution" evidence="2">
    <conflict type="erroneous initiation">
        <sequence resource="EMBL-CDS" id="CAA14588"/>
    </conflict>
    <text>Extended N-terminus.</text>
</comment>
<keyword id="KW-0963">Cytoplasm</keyword>
<keyword id="KW-0227">DNA damage</keyword>
<keyword id="KW-0233">DNA recombination</keyword>
<keyword id="KW-0234">DNA repair</keyword>
<keyword id="KW-0238">DNA-binding</keyword>
<keyword id="KW-0255">Endonuclease</keyword>
<keyword id="KW-0378">Hydrolase</keyword>
<keyword id="KW-0460">Magnesium</keyword>
<keyword id="KW-0479">Metal-binding</keyword>
<keyword id="KW-0540">Nuclease</keyword>
<keyword id="KW-1185">Reference proteome</keyword>
<evidence type="ECO:0000255" key="1">
    <source>
        <dbReference type="HAMAP-Rule" id="MF_00034"/>
    </source>
</evidence>
<evidence type="ECO:0000305" key="2"/>
<name>RUVC_RICPR</name>
<feature type="chain" id="PRO_0000183129" description="Crossover junction endodeoxyribonuclease RuvC">
    <location>
        <begin position="1"/>
        <end position="157"/>
    </location>
</feature>
<feature type="active site" evidence="1">
    <location>
        <position position="7"/>
    </location>
</feature>
<feature type="active site" evidence="1">
    <location>
        <position position="67"/>
    </location>
</feature>
<feature type="active site" evidence="1">
    <location>
        <position position="140"/>
    </location>
</feature>
<feature type="binding site" evidence="1">
    <location>
        <position position="7"/>
    </location>
    <ligand>
        <name>Mg(2+)</name>
        <dbReference type="ChEBI" id="CHEBI:18420"/>
        <label>1</label>
    </ligand>
</feature>
<feature type="binding site" evidence="1">
    <location>
        <position position="67"/>
    </location>
    <ligand>
        <name>Mg(2+)</name>
        <dbReference type="ChEBI" id="CHEBI:18420"/>
        <label>2</label>
    </ligand>
</feature>
<feature type="binding site" evidence="1">
    <location>
        <position position="140"/>
    </location>
    <ligand>
        <name>Mg(2+)</name>
        <dbReference type="ChEBI" id="CHEBI:18420"/>
        <label>1</label>
    </ligand>
</feature>
<gene>
    <name evidence="1" type="primary">ruvC</name>
    <name type="ordered locus">RP119</name>
</gene>
<dbReference type="EC" id="3.1.21.10" evidence="1"/>
<dbReference type="EMBL" id="AJ235270">
    <property type="protein sequence ID" value="CAA14588.1"/>
    <property type="status" value="ALT_INIT"/>
    <property type="molecule type" value="Genomic_DNA"/>
</dbReference>
<dbReference type="PIR" id="E71721">
    <property type="entry name" value="E71721"/>
</dbReference>
<dbReference type="RefSeq" id="NP_220511.2">
    <property type="nucleotide sequence ID" value="NC_000963.1"/>
</dbReference>
<dbReference type="RefSeq" id="WP_004597152.1">
    <property type="nucleotide sequence ID" value="NC_000963.1"/>
</dbReference>
<dbReference type="SMR" id="Q9ZE29"/>
<dbReference type="STRING" id="272947.gene:17555202"/>
<dbReference type="EnsemblBacteria" id="CAA14588">
    <property type="protein sequence ID" value="CAA14588"/>
    <property type="gene ID" value="CAA14588"/>
</dbReference>
<dbReference type="GeneID" id="57569247"/>
<dbReference type="KEGG" id="rpr:RP119"/>
<dbReference type="PATRIC" id="fig|272947.5.peg.121"/>
<dbReference type="eggNOG" id="COG0817">
    <property type="taxonomic scope" value="Bacteria"/>
</dbReference>
<dbReference type="HOGENOM" id="CLU_091257_1_0_5"/>
<dbReference type="OrthoDB" id="9805499at2"/>
<dbReference type="Proteomes" id="UP000002480">
    <property type="component" value="Chromosome"/>
</dbReference>
<dbReference type="GO" id="GO:0005737">
    <property type="term" value="C:cytoplasm"/>
    <property type="evidence" value="ECO:0007669"/>
    <property type="project" value="UniProtKB-SubCell"/>
</dbReference>
<dbReference type="GO" id="GO:0048476">
    <property type="term" value="C:Holliday junction resolvase complex"/>
    <property type="evidence" value="ECO:0007669"/>
    <property type="project" value="UniProtKB-UniRule"/>
</dbReference>
<dbReference type="GO" id="GO:0008821">
    <property type="term" value="F:crossover junction DNA endonuclease activity"/>
    <property type="evidence" value="ECO:0007669"/>
    <property type="project" value="UniProtKB-UniRule"/>
</dbReference>
<dbReference type="GO" id="GO:0003677">
    <property type="term" value="F:DNA binding"/>
    <property type="evidence" value="ECO:0007669"/>
    <property type="project" value="UniProtKB-KW"/>
</dbReference>
<dbReference type="GO" id="GO:0000287">
    <property type="term" value="F:magnesium ion binding"/>
    <property type="evidence" value="ECO:0007669"/>
    <property type="project" value="UniProtKB-UniRule"/>
</dbReference>
<dbReference type="GO" id="GO:0006310">
    <property type="term" value="P:DNA recombination"/>
    <property type="evidence" value="ECO:0007669"/>
    <property type="project" value="UniProtKB-UniRule"/>
</dbReference>
<dbReference type="GO" id="GO:0006281">
    <property type="term" value="P:DNA repair"/>
    <property type="evidence" value="ECO:0007669"/>
    <property type="project" value="UniProtKB-UniRule"/>
</dbReference>
<dbReference type="CDD" id="cd16962">
    <property type="entry name" value="RuvC"/>
    <property type="match status" value="1"/>
</dbReference>
<dbReference type="FunFam" id="3.30.420.10:FF:000002">
    <property type="entry name" value="Crossover junction endodeoxyribonuclease RuvC"/>
    <property type="match status" value="1"/>
</dbReference>
<dbReference type="Gene3D" id="3.30.420.10">
    <property type="entry name" value="Ribonuclease H-like superfamily/Ribonuclease H"/>
    <property type="match status" value="1"/>
</dbReference>
<dbReference type="HAMAP" id="MF_00034">
    <property type="entry name" value="RuvC"/>
    <property type="match status" value="1"/>
</dbReference>
<dbReference type="InterPro" id="IPR012337">
    <property type="entry name" value="RNaseH-like_sf"/>
</dbReference>
<dbReference type="InterPro" id="IPR036397">
    <property type="entry name" value="RNaseH_sf"/>
</dbReference>
<dbReference type="InterPro" id="IPR020563">
    <property type="entry name" value="X-over_junc_endoDNase_Mg_BS"/>
</dbReference>
<dbReference type="InterPro" id="IPR002176">
    <property type="entry name" value="X-over_junc_endoDNase_RuvC"/>
</dbReference>
<dbReference type="NCBIfam" id="TIGR00228">
    <property type="entry name" value="ruvC"/>
    <property type="match status" value="1"/>
</dbReference>
<dbReference type="PANTHER" id="PTHR30194">
    <property type="entry name" value="CROSSOVER JUNCTION ENDODEOXYRIBONUCLEASE RUVC"/>
    <property type="match status" value="1"/>
</dbReference>
<dbReference type="PANTHER" id="PTHR30194:SF3">
    <property type="entry name" value="CROSSOVER JUNCTION ENDODEOXYRIBONUCLEASE RUVC"/>
    <property type="match status" value="1"/>
</dbReference>
<dbReference type="Pfam" id="PF02075">
    <property type="entry name" value="RuvC"/>
    <property type="match status" value="1"/>
</dbReference>
<dbReference type="PRINTS" id="PR00696">
    <property type="entry name" value="RSOLVASERUVC"/>
</dbReference>
<dbReference type="SUPFAM" id="SSF53098">
    <property type="entry name" value="Ribonuclease H-like"/>
    <property type="match status" value="1"/>
</dbReference>
<dbReference type="PROSITE" id="PS01321">
    <property type="entry name" value="RUVC"/>
    <property type="match status" value="1"/>
</dbReference>
<sequence length="157" mass="17299">MIVLGIDPALGKLGWAVVAKESTKLHYLASGTIKTHSKDEIHNRLAFINSILEKVILEYQPNIAAIEETFVNTNNVTSLKLGYARGAIMSLIGRYNLDMQEFKPNTVKKTVTGYGHAGKEQILYMIKHLISGTDLITNSDEADAVALAYTCLVAKKY</sequence>